<reference key="1">
    <citation type="submission" date="2007-05" db="EMBL/GenBank/DDBJ databases">
        <title>Complete sequence of Dehalococcoides sp. BAV1.</title>
        <authorList>
            <consortium name="US DOE Joint Genome Institute"/>
            <person name="Copeland A."/>
            <person name="Lucas S."/>
            <person name="Lapidus A."/>
            <person name="Barry K."/>
            <person name="Detter J.C."/>
            <person name="Glavina del Rio T."/>
            <person name="Hammon N."/>
            <person name="Israni S."/>
            <person name="Pitluck S."/>
            <person name="Lowry S."/>
            <person name="Clum A."/>
            <person name="Schmutz J."/>
            <person name="Larimer F."/>
            <person name="Land M."/>
            <person name="Hauser L."/>
            <person name="Kyrpides N."/>
            <person name="Kim E."/>
            <person name="Ritalahti K.M."/>
            <person name="Loeffler F."/>
            <person name="Richardson P."/>
        </authorList>
    </citation>
    <scope>NUCLEOTIDE SEQUENCE [LARGE SCALE GENOMIC DNA]</scope>
    <source>
        <strain>ATCC BAA-2100 / JCM 16839 / KCTC 5957 / BAV1</strain>
    </source>
</reference>
<sequence length="241" mass="26556">MQRGDGRNFNQLRPITITPGFQSFAEGSVLIEQGKTRVICSVSMEDRVPQFLRNSGTGWVTAEYSMLPRSTVTRTQRDSSAGKISGRSQEIQRLIGRSLRSCVDMAALGERSFIVDCDVIQADAGTRTASITGSYIALYLAFKKMVDMGILSKMPFTSQVAAVSVSIFKGNIVLDPCYDEDFQAEVDFNLVMNDRGEFVEIQGTAEGKAFSRDTLDQVLKLGEAGIRQLFDIQKGITQPQL</sequence>
<proteinExistence type="inferred from homology"/>
<evidence type="ECO:0000255" key="1">
    <source>
        <dbReference type="HAMAP-Rule" id="MF_00564"/>
    </source>
</evidence>
<gene>
    <name evidence="1" type="primary">rph</name>
    <name type="ordered locus">DehaBAV1_1100</name>
</gene>
<dbReference type="EC" id="2.7.7.56" evidence="1"/>
<dbReference type="EMBL" id="CP000688">
    <property type="protein sequence ID" value="ABQ17680.1"/>
    <property type="molecule type" value="Genomic_DNA"/>
</dbReference>
<dbReference type="SMR" id="A5FQ49"/>
<dbReference type="KEGG" id="deb:DehaBAV1_1100"/>
<dbReference type="PATRIC" id="fig|216389.18.peg.1162"/>
<dbReference type="HOGENOM" id="CLU_050858_0_0_0"/>
<dbReference type="GO" id="GO:0000175">
    <property type="term" value="F:3'-5'-RNA exonuclease activity"/>
    <property type="evidence" value="ECO:0007669"/>
    <property type="project" value="UniProtKB-UniRule"/>
</dbReference>
<dbReference type="GO" id="GO:0000049">
    <property type="term" value="F:tRNA binding"/>
    <property type="evidence" value="ECO:0007669"/>
    <property type="project" value="UniProtKB-UniRule"/>
</dbReference>
<dbReference type="GO" id="GO:0009022">
    <property type="term" value="F:tRNA nucleotidyltransferase activity"/>
    <property type="evidence" value="ECO:0007669"/>
    <property type="project" value="UniProtKB-UniRule"/>
</dbReference>
<dbReference type="GO" id="GO:0016075">
    <property type="term" value="P:rRNA catabolic process"/>
    <property type="evidence" value="ECO:0007669"/>
    <property type="project" value="UniProtKB-UniRule"/>
</dbReference>
<dbReference type="GO" id="GO:0006364">
    <property type="term" value="P:rRNA processing"/>
    <property type="evidence" value="ECO:0007669"/>
    <property type="project" value="UniProtKB-KW"/>
</dbReference>
<dbReference type="GO" id="GO:0008033">
    <property type="term" value="P:tRNA processing"/>
    <property type="evidence" value="ECO:0007669"/>
    <property type="project" value="UniProtKB-UniRule"/>
</dbReference>
<dbReference type="CDD" id="cd11362">
    <property type="entry name" value="RNase_PH_bact"/>
    <property type="match status" value="1"/>
</dbReference>
<dbReference type="FunFam" id="3.30.230.70:FF:000003">
    <property type="entry name" value="Ribonuclease PH"/>
    <property type="match status" value="1"/>
</dbReference>
<dbReference type="Gene3D" id="3.30.230.70">
    <property type="entry name" value="GHMP Kinase, N-terminal domain"/>
    <property type="match status" value="1"/>
</dbReference>
<dbReference type="HAMAP" id="MF_00564">
    <property type="entry name" value="RNase_PH"/>
    <property type="match status" value="1"/>
</dbReference>
<dbReference type="InterPro" id="IPR001247">
    <property type="entry name" value="ExoRNase_PH_dom1"/>
</dbReference>
<dbReference type="InterPro" id="IPR015847">
    <property type="entry name" value="ExoRNase_PH_dom2"/>
</dbReference>
<dbReference type="InterPro" id="IPR036345">
    <property type="entry name" value="ExoRNase_PH_dom2_sf"/>
</dbReference>
<dbReference type="InterPro" id="IPR027408">
    <property type="entry name" value="PNPase/RNase_PH_dom_sf"/>
</dbReference>
<dbReference type="InterPro" id="IPR020568">
    <property type="entry name" value="Ribosomal_Su5_D2-typ_SF"/>
</dbReference>
<dbReference type="InterPro" id="IPR050080">
    <property type="entry name" value="RNase_PH"/>
</dbReference>
<dbReference type="InterPro" id="IPR002381">
    <property type="entry name" value="RNase_PH_bac-type"/>
</dbReference>
<dbReference type="InterPro" id="IPR018336">
    <property type="entry name" value="RNase_PH_CS"/>
</dbReference>
<dbReference type="NCBIfam" id="TIGR01966">
    <property type="entry name" value="RNasePH"/>
    <property type="match status" value="1"/>
</dbReference>
<dbReference type="PANTHER" id="PTHR11953">
    <property type="entry name" value="EXOSOME COMPLEX COMPONENT"/>
    <property type="match status" value="1"/>
</dbReference>
<dbReference type="PANTHER" id="PTHR11953:SF0">
    <property type="entry name" value="EXOSOME COMPLEX COMPONENT RRP41"/>
    <property type="match status" value="1"/>
</dbReference>
<dbReference type="Pfam" id="PF01138">
    <property type="entry name" value="RNase_PH"/>
    <property type="match status" value="1"/>
</dbReference>
<dbReference type="Pfam" id="PF03725">
    <property type="entry name" value="RNase_PH_C"/>
    <property type="match status" value="1"/>
</dbReference>
<dbReference type="SUPFAM" id="SSF55666">
    <property type="entry name" value="Ribonuclease PH domain 2-like"/>
    <property type="match status" value="1"/>
</dbReference>
<dbReference type="SUPFAM" id="SSF54211">
    <property type="entry name" value="Ribosomal protein S5 domain 2-like"/>
    <property type="match status" value="1"/>
</dbReference>
<dbReference type="PROSITE" id="PS01277">
    <property type="entry name" value="RIBONUCLEASE_PH"/>
    <property type="match status" value="1"/>
</dbReference>
<comment type="function">
    <text evidence="1">Phosphorolytic 3'-5' exoribonuclease that plays an important role in tRNA 3'-end maturation. Removes nucleotide residues following the 3'-CCA terminus of tRNAs; can also add nucleotides to the ends of RNA molecules by using nucleoside diphosphates as substrates, but this may not be physiologically important. Probably plays a role in initiation of 16S rRNA degradation (leading to ribosome degradation) during starvation.</text>
</comment>
<comment type="catalytic activity">
    <reaction evidence="1">
        <text>tRNA(n+1) + phosphate = tRNA(n) + a ribonucleoside 5'-diphosphate</text>
        <dbReference type="Rhea" id="RHEA:10628"/>
        <dbReference type="Rhea" id="RHEA-COMP:17343"/>
        <dbReference type="Rhea" id="RHEA-COMP:17344"/>
        <dbReference type="ChEBI" id="CHEBI:43474"/>
        <dbReference type="ChEBI" id="CHEBI:57930"/>
        <dbReference type="ChEBI" id="CHEBI:173114"/>
        <dbReference type="EC" id="2.7.7.56"/>
    </reaction>
</comment>
<comment type="subunit">
    <text evidence="1">Homohexameric ring arranged as a trimer of dimers.</text>
</comment>
<comment type="similarity">
    <text evidence="1">Belongs to the RNase PH family.</text>
</comment>
<keyword id="KW-0548">Nucleotidyltransferase</keyword>
<keyword id="KW-0694">RNA-binding</keyword>
<keyword id="KW-0698">rRNA processing</keyword>
<keyword id="KW-0808">Transferase</keyword>
<keyword id="KW-0819">tRNA processing</keyword>
<keyword id="KW-0820">tRNA-binding</keyword>
<protein>
    <recommendedName>
        <fullName evidence="1">Ribonuclease PH</fullName>
        <shortName evidence="1">RNase PH</shortName>
        <ecNumber evidence="1">2.7.7.56</ecNumber>
    </recommendedName>
    <alternativeName>
        <fullName evidence="1">tRNA nucleotidyltransferase</fullName>
    </alternativeName>
</protein>
<name>RNPH_DEHMB</name>
<accession>A5FQ49</accession>
<organism>
    <name type="scientific">Dehalococcoides mccartyi (strain ATCC BAA-2100 / JCM 16839 / KCTC 5957 / BAV1)</name>
    <dbReference type="NCBI Taxonomy" id="216389"/>
    <lineage>
        <taxon>Bacteria</taxon>
        <taxon>Bacillati</taxon>
        <taxon>Chloroflexota</taxon>
        <taxon>Dehalococcoidia</taxon>
        <taxon>Dehalococcoidales</taxon>
        <taxon>Dehalococcoidaceae</taxon>
        <taxon>Dehalococcoides</taxon>
    </lineage>
</organism>
<feature type="chain" id="PRO_1000082289" description="Ribonuclease PH">
    <location>
        <begin position="1"/>
        <end position="241"/>
    </location>
</feature>
<feature type="binding site" evidence="1">
    <location>
        <position position="87"/>
    </location>
    <ligand>
        <name>phosphate</name>
        <dbReference type="ChEBI" id="CHEBI:43474"/>
        <note>substrate</note>
    </ligand>
</feature>
<feature type="binding site" evidence="1">
    <location>
        <begin position="125"/>
        <end position="127"/>
    </location>
    <ligand>
        <name>phosphate</name>
        <dbReference type="ChEBI" id="CHEBI:43474"/>
        <note>substrate</note>
    </ligand>
</feature>